<name>YGIV_ECOLI</name>
<evidence type="ECO:0000269" key="1">
    <source>
    </source>
</evidence>
<evidence type="ECO:0000305" key="2"/>
<protein>
    <recommendedName>
        <fullName>Probable transcriptional regulator YgiV</fullName>
    </recommendedName>
</protein>
<accession>Q46866</accession>
<accession>Q2M9H7</accession>
<accession>Q6BF52</accession>
<reference key="1">
    <citation type="journal article" date="1997" name="Science">
        <title>The complete genome sequence of Escherichia coli K-12.</title>
        <authorList>
            <person name="Blattner F.R."/>
            <person name="Plunkett G. III"/>
            <person name="Bloch C.A."/>
            <person name="Perna N.T."/>
            <person name="Burland V."/>
            <person name="Riley M."/>
            <person name="Collado-Vides J."/>
            <person name="Glasner J.D."/>
            <person name="Rode C.K."/>
            <person name="Mayhew G.F."/>
            <person name="Gregor J."/>
            <person name="Davis N.W."/>
            <person name="Kirkpatrick H.A."/>
            <person name="Goeden M.A."/>
            <person name="Rose D.J."/>
            <person name="Mau B."/>
            <person name="Shao Y."/>
        </authorList>
    </citation>
    <scope>NUCLEOTIDE SEQUENCE [LARGE SCALE GENOMIC DNA]</scope>
    <source>
        <strain>K12 / MG1655 / ATCC 47076</strain>
    </source>
</reference>
<reference key="2">
    <citation type="journal article" date="2006" name="Nucleic Acids Res.">
        <title>Escherichia coli K-12: a cooperatively developed annotation snapshot -- 2005.</title>
        <authorList>
            <person name="Riley M."/>
            <person name="Abe T."/>
            <person name="Arnaud M.B."/>
            <person name="Berlyn M.K.B."/>
            <person name="Blattner F.R."/>
            <person name="Chaudhuri R.R."/>
            <person name="Glasner J.D."/>
            <person name="Horiuchi T."/>
            <person name="Keseler I.M."/>
            <person name="Kosuge T."/>
            <person name="Mori H."/>
            <person name="Perna N.T."/>
            <person name="Plunkett G. III"/>
            <person name="Rudd K.E."/>
            <person name="Serres M.H."/>
            <person name="Thomas G.H."/>
            <person name="Thomson N.R."/>
            <person name="Wishart D."/>
            <person name="Wanner B.L."/>
        </authorList>
    </citation>
    <scope>SEQUENCE REVISION TO 104-105</scope>
</reference>
<reference key="3">
    <citation type="journal article" date="2006" name="Mol. Syst. Biol.">
        <title>Highly accurate genome sequences of Escherichia coli K-12 strains MG1655 and W3110.</title>
        <authorList>
            <person name="Hayashi K."/>
            <person name="Morooka N."/>
            <person name="Yamamoto Y."/>
            <person name="Fujita K."/>
            <person name="Isono K."/>
            <person name="Choi S."/>
            <person name="Ohtsubo E."/>
            <person name="Baba T."/>
            <person name="Wanner B.L."/>
            <person name="Mori H."/>
            <person name="Horiuchi T."/>
        </authorList>
    </citation>
    <scope>NUCLEOTIDE SEQUENCE [LARGE SCALE GENOMIC DNA]</scope>
    <source>
        <strain>K12 / W3110 / ATCC 27325 / DSM 5911</strain>
    </source>
</reference>
<reference key="4">
    <citation type="journal article" date="2008" name="ISME J.">
        <title>Escherichia coli transcription factor YncC (McbR) regulates colanic acid and biofilm formation by repressing expression of periplasmic protein YbiM (McbA).</title>
        <authorList>
            <person name="Zhang X.-S."/>
            <person name="Garcia-Contreras R."/>
            <person name="Wood T.K."/>
        </authorList>
    </citation>
    <scope>FUNCTION</scope>
    <source>
        <strain>K12 / BW25113</strain>
    </source>
</reference>
<comment type="function">
    <text evidence="1">Represses expression of mcbR.</text>
</comment>
<sequence>MTNLTLDVNIIDFPSIPVAMLPHRCSPELLNYSVAKFIMWRKETGLSPVNQSQTFGVAWDDPATTAPEAFRFDICGSVSEPIPDNRYGVSNGELTGGRYAVARHVGELDDISHTVWGIIRHWLPASGEKMRKAPILFHYTNLAEGVTEQRLETDVYVPLA</sequence>
<gene>
    <name type="primary">ygiV</name>
    <name type="ordered locus">b3023</name>
    <name type="ordered locus">JW5502</name>
</gene>
<organism>
    <name type="scientific">Escherichia coli (strain K12)</name>
    <dbReference type="NCBI Taxonomy" id="83333"/>
    <lineage>
        <taxon>Bacteria</taxon>
        <taxon>Pseudomonadati</taxon>
        <taxon>Pseudomonadota</taxon>
        <taxon>Gammaproteobacteria</taxon>
        <taxon>Enterobacterales</taxon>
        <taxon>Enterobacteriaceae</taxon>
        <taxon>Escherichia</taxon>
    </lineage>
</organism>
<feature type="chain" id="PRO_0000201333" description="Probable transcriptional regulator YgiV">
    <location>
        <begin position="1"/>
        <end position="160"/>
    </location>
</feature>
<feature type="sequence conflict" description="In Ref. 1; AAA69191." evidence="2" ref="1">
    <original>HV</original>
    <variation>QL</variation>
    <location>
        <begin position="104"/>
        <end position="105"/>
    </location>
</feature>
<dbReference type="EMBL" id="U28377">
    <property type="protein sequence ID" value="AAA69191.1"/>
    <property type="molecule type" value="Genomic_DNA"/>
</dbReference>
<dbReference type="EMBL" id="U00096">
    <property type="protein sequence ID" value="AAT48162.1"/>
    <property type="molecule type" value="Genomic_DNA"/>
</dbReference>
<dbReference type="EMBL" id="AP009048">
    <property type="protein sequence ID" value="BAE77079.1"/>
    <property type="molecule type" value="Genomic_DNA"/>
</dbReference>
<dbReference type="PIR" id="E65089">
    <property type="entry name" value="E65089"/>
</dbReference>
<dbReference type="RefSeq" id="WP_000183505.1">
    <property type="nucleotide sequence ID" value="NZ_STEB01000001.1"/>
</dbReference>
<dbReference type="RefSeq" id="YP_026197.1">
    <property type="nucleotide sequence ID" value="NC_000913.3"/>
</dbReference>
<dbReference type="SMR" id="Q46866"/>
<dbReference type="BioGRID" id="4259248">
    <property type="interactions" value="67"/>
</dbReference>
<dbReference type="FunCoup" id="Q46866">
    <property type="interactions" value="18"/>
</dbReference>
<dbReference type="STRING" id="511145.b3023"/>
<dbReference type="PaxDb" id="511145-b3023"/>
<dbReference type="EnsemblBacteria" id="AAT48162">
    <property type="protein sequence ID" value="AAT48162"/>
    <property type="gene ID" value="b3023"/>
</dbReference>
<dbReference type="GeneID" id="945805"/>
<dbReference type="KEGG" id="ecj:JW5502"/>
<dbReference type="KEGG" id="eco:b3023"/>
<dbReference type="KEGG" id="ecoc:C3026_16515"/>
<dbReference type="PATRIC" id="fig|1411691.4.peg.3707"/>
<dbReference type="EchoBASE" id="EB2842"/>
<dbReference type="eggNOG" id="COG3449">
    <property type="taxonomic scope" value="Bacteria"/>
</dbReference>
<dbReference type="HOGENOM" id="CLU_129801_0_0_6"/>
<dbReference type="InParanoid" id="Q46866"/>
<dbReference type="OMA" id="IVNIEPI"/>
<dbReference type="OrthoDB" id="282744at2"/>
<dbReference type="PhylomeDB" id="Q46866"/>
<dbReference type="BioCyc" id="EcoCyc:G7573-MONOMER"/>
<dbReference type="PRO" id="PR:Q46866"/>
<dbReference type="Proteomes" id="UP000000625">
    <property type="component" value="Chromosome"/>
</dbReference>
<dbReference type="GO" id="GO:0045892">
    <property type="term" value="P:negative regulation of DNA-templated transcription"/>
    <property type="evidence" value="ECO:0000315"/>
    <property type="project" value="EcoCyc"/>
</dbReference>
<dbReference type="FunFam" id="3.20.80.10:FF:000005">
    <property type="entry name" value="Transcriptional regulator, effector binding domain protein"/>
    <property type="match status" value="1"/>
</dbReference>
<dbReference type="Gene3D" id="3.20.80.10">
    <property type="entry name" value="Regulatory factor, effector binding domain"/>
    <property type="match status" value="1"/>
</dbReference>
<dbReference type="InterPro" id="IPR010499">
    <property type="entry name" value="AraC_E-bd"/>
</dbReference>
<dbReference type="InterPro" id="IPR050908">
    <property type="entry name" value="DNA_gyrase_inhibitor"/>
</dbReference>
<dbReference type="InterPro" id="IPR029442">
    <property type="entry name" value="GyrI-like"/>
</dbReference>
<dbReference type="InterPro" id="IPR011256">
    <property type="entry name" value="Reg_factor_effector_dom_sf"/>
</dbReference>
<dbReference type="PANTHER" id="PTHR40055">
    <property type="entry name" value="TRANSCRIPTIONAL REGULATOR YGIV-RELATED"/>
    <property type="match status" value="1"/>
</dbReference>
<dbReference type="PANTHER" id="PTHR40055:SF1">
    <property type="entry name" value="TRANSCRIPTIONAL REGULATOR YGIV-RELATED"/>
    <property type="match status" value="1"/>
</dbReference>
<dbReference type="Pfam" id="PF06445">
    <property type="entry name" value="GyrI-like"/>
    <property type="match status" value="1"/>
</dbReference>
<dbReference type="SMART" id="SM00871">
    <property type="entry name" value="AraC_E_bind"/>
    <property type="match status" value="1"/>
</dbReference>
<dbReference type="SUPFAM" id="SSF55136">
    <property type="entry name" value="Probable bacterial effector-binding domain"/>
    <property type="match status" value="1"/>
</dbReference>
<proteinExistence type="predicted"/>
<keyword id="KW-1185">Reference proteome</keyword>
<keyword id="KW-0678">Repressor</keyword>
<keyword id="KW-0804">Transcription</keyword>
<keyword id="KW-0805">Transcription regulation</keyword>